<gene>
    <name evidence="1" type="primary">rplB</name>
    <name type="ordered locus">lp_1036</name>
</gene>
<sequence length="279" mass="30192">MGIKKYKPTTNGRRNMTASDFSEITKTKPEKSLLDSQSHTAGRNSYGHITVRHRGGGHKQQYRLVDFKRIKDEVPATVKAIEYDPNRTANIALLVYADGVKSYILAPKGLEVGMQVQSGAEADIKVGNALPLTNIPVGTVIHNIELKPGKGGQLARSAGTSAQLLGKEGKYAIVRLSSGEVRLVLLTSRATIGTVGNEQHELINSGKAGRTRWQGKRPTVRGSVMNPNDHPHGGGEGKAPIGHPSPMSPWGKKTLGKKTRNKKARSNKLIVRGRRPGKH</sequence>
<name>RL2_LACPL</name>
<keyword id="KW-1185">Reference proteome</keyword>
<keyword id="KW-0687">Ribonucleoprotein</keyword>
<keyword id="KW-0689">Ribosomal protein</keyword>
<keyword id="KW-0694">RNA-binding</keyword>
<keyword id="KW-0699">rRNA-binding</keyword>
<accession>Q88XY3</accession>
<accession>F9UMK8</accession>
<comment type="function">
    <text evidence="1">One of the primary rRNA binding proteins. Required for association of the 30S and 50S subunits to form the 70S ribosome, for tRNA binding and peptide bond formation. It has been suggested to have peptidyltransferase activity; this is somewhat controversial. Makes several contacts with the 16S rRNA in the 70S ribosome.</text>
</comment>
<comment type="subunit">
    <text evidence="1">Part of the 50S ribosomal subunit. Forms a bridge to the 30S subunit in the 70S ribosome.</text>
</comment>
<comment type="similarity">
    <text evidence="1">Belongs to the universal ribosomal protein uL2 family.</text>
</comment>
<organism>
    <name type="scientific">Lactiplantibacillus plantarum (strain ATCC BAA-793 / NCIMB 8826 / WCFS1)</name>
    <name type="common">Lactobacillus plantarum</name>
    <dbReference type="NCBI Taxonomy" id="220668"/>
    <lineage>
        <taxon>Bacteria</taxon>
        <taxon>Bacillati</taxon>
        <taxon>Bacillota</taxon>
        <taxon>Bacilli</taxon>
        <taxon>Lactobacillales</taxon>
        <taxon>Lactobacillaceae</taxon>
        <taxon>Lactiplantibacillus</taxon>
    </lineage>
</organism>
<dbReference type="EMBL" id="AL935263">
    <property type="protein sequence ID" value="CCC78447.1"/>
    <property type="molecule type" value="Genomic_DNA"/>
</dbReference>
<dbReference type="RefSeq" id="WP_003641255.1">
    <property type="nucleotide sequence ID" value="NC_004567.2"/>
</dbReference>
<dbReference type="RefSeq" id="YP_004888961.1">
    <property type="nucleotide sequence ID" value="NC_004567.2"/>
</dbReference>
<dbReference type="SMR" id="Q88XY3"/>
<dbReference type="STRING" id="220668.lp_1036"/>
<dbReference type="EnsemblBacteria" id="CCC78447">
    <property type="protein sequence ID" value="CCC78447"/>
    <property type="gene ID" value="lp_1036"/>
</dbReference>
<dbReference type="GeneID" id="77217521"/>
<dbReference type="KEGG" id="lpl:lp_1036"/>
<dbReference type="PATRIC" id="fig|220668.9.peg.874"/>
<dbReference type="eggNOG" id="COG0090">
    <property type="taxonomic scope" value="Bacteria"/>
</dbReference>
<dbReference type="HOGENOM" id="CLU_036235_2_1_9"/>
<dbReference type="OrthoDB" id="9778722at2"/>
<dbReference type="PhylomeDB" id="Q88XY3"/>
<dbReference type="Proteomes" id="UP000000432">
    <property type="component" value="Chromosome"/>
</dbReference>
<dbReference type="GO" id="GO:0015934">
    <property type="term" value="C:large ribosomal subunit"/>
    <property type="evidence" value="ECO:0007669"/>
    <property type="project" value="InterPro"/>
</dbReference>
<dbReference type="GO" id="GO:0019843">
    <property type="term" value="F:rRNA binding"/>
    <property type="evidence" value="ECO:0007669"/>
    <property type="project" value="UniProtKB-UniRule"/>
</dbReference>
<dbReference type="GO" id="GO:0003735">
    <property type="term" value="F:structural constituent of ribosome"/>
    <property type="evidence" value="ECO:0007669"/>
    <property type="project" value="InterPro"/>
</dbReference>
<dbReference type="GO" id="GO:0016740">
    <property type="term" value="F:transferase activity"/>
    <property type="evidence" value="ECO:0007669"/>
    <property type="project" value="InterPro"/>
</dbReference>
<dbReference type="GO" id="GO:0002181">
    <property type="term" value="P:cytoplasmic translation"/>
    <property type="evidence" value="ECO:0007669"/>
    <property type="project" value="TreeGrafter"/>
</dbReference>
<dbReference type="FunFam" id="2.30.30.30:FF:000001">
    <property type="entry name" value="50S ribosomal protein L2"/>
    <property type="match status" value="1"/>
</dbReference>
<dbReference type="FunFam" id="2.40.50.140:FF:000003">
    <property type="entry name" value="50S ribosomal protein L2"/>
    <property type="match status" value="1"/>
</dbReference>
<dbReference type="FunFam" id="4.10.950.10:FF:000001">
    <property type="entry name" value="50S ribosomal protein L2"/>
    <property type="match status" value="1"/>
</dbReference>
<dbReference type="Gene3D" id="2.30.30.30">
    <property type="match status" value="1"/>
</dbReference>
<dbReference type="Gene3D" id="2.40.50.140">
    <property type="entry name" value="Nucleic acid-binding proteins"/>
    <property type="match status" value="1"/>
</dbReference>
<dbReference type="Gene3D" id="4.10.950.10">
    <property type="entry name" value="Ribosomal protein L2, domain 3"/>
    <property type="match status" value="1"/>
</dbReference>
<dbReference type="HAMAP" id="MF_01320_B">
    <property type="entry name" value="Ribosomal_uL2_B"/>
    <property type="match status" value="1"/>
</dbReference>
<dbReference type="InterPro" id="IPR012340">
    <property type="entry name" value="NA-bd_OB-fold"/>
</dbReference>
<dbReference type="InterPro" id="IPR014722">
    <property type="entry name" value="Rib_uL2_dom2"/>
</dbReference>
<dbReference type="InterPro" id="IPR002171">
    <property type="entry name" value="Ribosomal_uL2"/>
</dbReference>
<dbReference type="InterPro" id="IPR005880">
    <property type="entry name" value="Ribosomal_uL2_bac/org-type"/>
</dbReference>
<dbReference type="InterPro" id="IPR022669">
    <property type="entry name" value="Ribosomal_uL2_C"/>
</dbReference>
<dbReference type="InterPro" id="IPR022671">
    <property type="entry name" value="Ribosomal_uL2_CS"/>
</dbReference>
<dbReference type="InterPro" id="IPR014726">
    <property type="entry name" value="Ribosomal_uL2_dom3"/>
</dbReference>
<dbReference type="InterPro" id="IPR022666">
    <property type="entry name" value="Ribosomal_uL2_RNA-bd_dom"/>
</dbReference>
<dbReference type="InterPro" id="IPR008991">
    <property type="entry name" value="Translation_prot_SH3-like_sf"/>
</dbReference>
<dbReference type="NCBIfam" id="TIGR01171">
    <property type="entry name" value="rplB_bact"/>
    <property type="match status" value="1"/>
</dbReference>
<dbReference type="PANTHER" id="PTHR13691:SF5">
    <property type="entry name" value="LARGE RIBOSOMAL SUBUNIT PROTEIN UL2M"/>
    <property type="match status" value="1"/>
</dbReference>
<dbReference type="PANTHER" id="PTHR13691">
    <property type="entry name" value="RIBOSOMAL PROTEIN L2"/>
    <property type="match status" value="1"/>
</dbReference>
<dbReference type="Pfam" id="PF00181">
    <property type="entry name" value="Ribosomal_L2"/>
    <property type="match status" value="1"/>
</dbReference>
<dbReference type="Pfam" id="PF03947">
    <property type="entry name" value="Ribosomal_L2_C"/>
    <property type="match status" value="1"/>
</dbReference>
<dbReference type="PIRSF" id="PIRSF002158">
    <property type="entry name" value="Ribosomal_L2"/>
    <property type="match status" value="1"/>
</dbReference>
<dbReference type="SMART" id="SM01383">
    <property type="entry name" value="Ribosomal_L2"/>
    <property type="match status" value="1"/>
</dbReference>
<dbReference type="SMART" id="SM01382">
    <property type="entry name" value="Ribosomal_L2_C"/>
    <property type="match status" value="1"/>
</dbReference>
<dbReference type="SUPFAM" id="SSF50249">
    <property type="entry name" value="Nucleic acid-binding proteins"/>
    <property type="match status" value="1"/>
</dbReference>
<dbReference type="SUPFAM" id="SSF50104">
    <property type="entry name" value="Translation proteins SH3-like domain"/>
    <property type="match status" value="1"/>
</dbReference>
<dbReference type="PROSITE" id="PS00467">
    <property type="entry name" value="RIBOSOMAL_L2"/>
    <property type="match status" value="1"/>
</dbReference>
<feature type="chain" id="PRO_0000129572" description="Large ribosomal subunit protein uL2">
    <location>
        <begin position="1"/>
        <end position="279"/>
    </location>
</feature>
<feature type="region of interest" description="Disordered" evidence="2">
    <location>
        <begin position="1"/>
        <end position="43"/>
    </location>
</feature>
<feature type="region of interest" description="Disordered" evidence="2">
    <location>
        <begin position="207"/>
        <end position="279"/>
    </location>
</feature>
<feature type="compositionally biased region" description="Polar residues" evidence="2">
    <location>
        <begin position="8"/>
        <end position="22"/>
    </location>
</feature>
<feature type="compositionally biased region" description="Basic and acidic residues" evidence="2">
    <location>
        <begin position="23"/>
        <end position="33"/>
    </location>
</feature>
<feature type="compositionally biased region" description="Polar residues" evidence="2">
    <location>
        <begin position="34"/>
        <end position="43"/>
    </location>
</feature>
<feature type="compositionally biased region" description="Basic residues" evidence="2">
    <location>
        <begin position="209"/>
        <end position="219"/>
    </location>
</feature>
<feature type="compositionally biased region" description="Basic residues" evidence="2">
    <location>
        <begin position="254"/>
        <end position="279"/>
    </location>
</feature>
<protein>
    <recommendedName>
        <fullName evidence="1">Large ribosomal subunit protein uL2</fullName>
    </recommendedName>
    <alternativeName>
        <fullName evidence="3">50S ribosomal protein L2</fullName>
    </alternativeName>
</protein>
<proteinExistence type="inferred from homology"/>
<evidence type="ECO:0000255" key="1">
    <source>
        <dbReference type="HAMAP-Rule" id="MF_01320"/>
    </source>
</evidence>
<evidence type="ECO:0000256" key="2">
    <source>
        <dbReference type="SAM" id="MobiDB-lite"/>
    </source>
</evidence>
<evidence type="ECO:0000305" key="3"/>
<reference key="1">
    <citation type="journal article" date="2003" name="Proc. Natl. Acad. Sci. U.S.A.">
        <title>Complete genome sequence of Lactobacillus plantarum WCFS1.</title>
        <authorList>
            <person name="Kleerebezem M."/>
            <person name="Boekhorst J."/>
            <person name="van Kranenburg R."/>
            <person name="Molenaar D."/>
            <person name="Kuipers O.P."/>
            <person name="Leer R."/>
            <person name="Tarchini R."/>
            <person name="Peters S.A."/>
            <person name="Sandbrink H.M."/>
            <person name="Fiers M.W.E.J."/>
            <person name="Stiekema W."/>
            <person name="Klein Lankhorst R.M."/>
            <person name="Bron P.A."/>
            <person name="Hoffer S.M."/>
            <person name="Nierop Groot M.N."/>
            <person name="Kerkhoven R."/>
            <person name="De Vries M."/>
            <person name="Ursing B."/>
            <person name="De Vos W.M."/>
            <person name="Siezen R.J."/>
        </authorList>
    </citation>
    <scope>NUCLEOTIDE SEQUENCE [LARGE SCALE GENOMIC DNA]</scope>
    <source>
        <strain>ATCC BAA-793 / NCIMB 8826 / WCFS1</strain>
    </source>
</reference>
<reference key="2">
    <citation type="journal article" date="2012" name="J. Bacteriol.">
        <title>Complete resequencing and reannotation of the Lactobacillus plantarum WCFS1 genome.</title>
        <authorList>
            <person name="Siezen R.J."/>
            <person name="Francke C."/>
            <person name="Renckens B."/>
            <person name="Boekhorst J."/>
            <person name="Wels M."/>
            <person name="Kleerebezem M."/>
            <person name="van Hijum S.A."/>
        </authorList>
    </citation>
    <scope>NUCLEOTIDE SEQUENCE [LARGE SCALE GENOMIC DNA]</scope>
    <scope>GENOME REANNOTATION</scope>
    <source>
        <strain>ATCC BAA-793 / NCIMB 8826 / WCFS1</strain>
    </source>
</reference>